<organism>
    <name type="scientific">Eremothecium gossypii (strain ATCC 10895 / CBS 109.51 / FGSC 9923 / NRRL Y-1056)</name>
    <name type="common">Yeast</name>
    <name type="synonym">Ashbya gossypii</name>
    <dbReference type="NCBI Taxonomy" id="284811"/>
    <lineage>
        <taxon>Eukaryota</taxon>
        <taxon>Fungi</taxon>
        <taxon>Dikarya</taxon>
        <taxon>Ascomycota</taxon>
        <taxon>Saccharomycotina</taxon>
        <taxon>Saccharomycetes</taxon>
        <taxon>Saccharomycetales</taxon>
        <taxon>Saccharomycetaceae</taxon>
        <taxon>Eremothecium</taxon>
    </lineage>
</organism>
<proteinExistence type="inferred from homology"/>
<keyword id="KW-0333">Golgi apparatus</keyword>
<keyword id="KW-0472">Membrane</keyword>
<keyword id="KW-0653">Protein transport</keyword>
<keyword id="KW-1185">Reference proteome</keyword>
<keyword id="KW-0813">Transport</keyword>
<comment type="function">
    <text evidence="1">Required for transport of secretory proteins from the Golgi complex. Catalyzes the transfer of phosphatidylinositol and phosphatidylcholine between membranes in vitro (By similarity).</text>
</comment>
<comment type="subcellular location">
    <subcellularLocation>
        <location evidence="1">Golgi apparatus membrane</location>
        <topology evidence="1">Peripheral membrane protein</topology>
    </subcellularLocation>
</comment>
<protein>
    <recommendedName>
        <fullName>SEC14 cytosolic factor</fullName>
    </recommendedName>
    <alternativeName>
        <fullName>Phosphatidylinositol/phosphatidylcholine transfer protein</fullName>
        <shortName>PI/PC TP</shortName>
    </alternativeName>
</protein>
<reference key="1">
    <citation type="journal article" date="2004" name="Science">
        <title>The Ashbya gossypii genome as a tool for mapping the ancient Saccharomyces cerevisiae genome.</title>
        <authorList>
            <person name="Dietrich F.S."/>
            <person name="Voegeli S."/>
            <person name="Brachat S."/>
            <person name="Lerch A."/>
            <person name="Gates K."/>
            <person name="Steiner S."/>
            <person name="Mohr C."/>
            <person name="Poehlmann R."/>
            <person name="Luedi P."/>
            <person name="Choi S."/>
            <person name="Wing R.A."/>
            <person name="Flavier A."/>
            <person name="Gaffney T.D."/>
            <person name="Philippsen P."/>
        </authorList>
    </citation>
    <scope>NUCLEOTIDE SEQUENCE [LARGE SCALE GENOMIC DNA]</scope>
    <source>
        <strain>ATCC 10895 / CBS 109.51 / FGSC 9923 / NRRL Y-1056</strain>
    </source>
</reference>
<reference key="2">
    <citation type="journal article" date="2013" name="G3 (Bethesda)">
        <title>Genomes of Ashbya fungi isolated from insects reveal four mating-type loci, numerous translocations, lack of transposons, and distinct gene duplications.</title>
        <authorList>
            <person name="Dietrich F.S."/>
            <person name="Voegeli S."/>
            <person name="Kuo S."/>
            <person name="Philippsen P."/>
        </authorList>
    </citation>
    <scope>GENOME REANNOTATION</scope>
    <scope>SEQUENCE REVISION TO 4</scope>
    <source>
        <strain>ATCC 10895 / CBS 109.51 / FGSC 9923 / NRRL Y-1056</strain>
    </source>
</reference>
<evidence type="ECO:0000250" key="1"/>
<evidence type="ECO:0000255" key="2">
    <source>
        <dbReference type="PROSITE-ProRule" id="PRU00056"/>
    </source>
</evidence>
<gene>
    <name type="primary">SEC14</name>
    <name type="ordered locus">ABR020W</name>
</gene>
<dbReference type="EMBL" id="AE016815">
    <property type="protein sequence ID" value="AAS50790.2"/>
    <property type="molecule type" value="Genomic_DNA"/>
</dbReference>
<dbReference type="RefSeq" id="NP_982966.2">
    <property type="nucleotide sequence ID" value="NM_208319.2"/>
</dbReference>
<dbReference type="SMR" id="Q75DK1"/>
<dbReference type="FunCoup" id="Q75DK1">
    <property type="interactions" value="308"/>
</dbReference>
<dbReference type="STRING" id="284811.Q75DK1"/>
<dbReference type="EnsemblFungi" id="AAS50790">
    <property type="protein sequence ID" value="AAS50790"/>
    <property type="gene ID" value="AGOS_ABR020W"/>
</dbReference>
<dbReference type="GeneID" id="4619058"/>
<dbReference type="KEGG" id="ago:AGOS_ABR020W"/>
<dbReference type="eggNOG" id="KOG1471">
    <property type="taxonomic scope" value="Eukaryota"/>
</dbReference>
<dbReference type="HOGENOM" id="CLU_014001_0_1_1"/>
<dbReference type="InParanoid" id="Q75DK1"/>
<dbReference type="OMA" id="FQYYPQY"/>
<dbReference type="OrthoDB" id="1434354at2759"/>
<dbReference type="Proteomes" id="UP000000591">
    <property type="component" value="Chromosome II"/>
</dbReference>
<dbReference type="GO" id="GO:0005829">
    <property type="term" value="C:cytosol"/>
    <property type="evidence" value="ECO:0007669"/>
    <property type="project" value="EnsemblFungi"/>
</dbReference>
<dbReference type="GO" id="GO:0000139">
    <property type="term" value="C:Golgi membrane"/>
    <property type="evidence" value="ECO:0007669"/>
    <property type="project" value="UniProtKB-SubCell"/>
</dbReference>
<dbReference type="GO" id="GO:0008525">
    <property type="term" value="F:phosphatidylcholine transporter activity"/>
    <property type="evidence" value="ECO:0007669"/>
    <property type="project" value="EnsemblFungi"/>
</dbReference>
<dbReference type="GO" id="GO:0008526">
    <property type="term" value="F:phosphatidylinositol transfer activity"/>
    <property type="evidence" value="ECO:0000318"/>
    <property type="project" value="GO_Central"/>
</dbReference>
<dbReference type="GO" id="GO:0030437">
    <property type="term" value="P:ascospore formation"/>
    <property type="evidence" value="ECO:0007669"/>
    <property type="project" value="EnsemblFungi"/>
</dbReference>
<dbReference type="GO" id="GO:0043001">
    <property type="term" value="P:Golgi to plasma membrane protein transport"/>
    <property type="evidence" value="ECO:0007669"/>
    <property type="project" value="EnsemblFungi"/>
</dbReference>
<dbReference type="GO" id="GO:0006896">
    <property type="term" value="P:Golgi to vacuole transport"/>
    <property type="evidence" value="ECO:0007669"/>
    <property type="project" value="EnsemblFungi"/>
</dbReference>
<dbReference type="GO" id="GO:0048194">
    <property type="term" value="P:Golgi vesicle budding"/>
    <property type="evidence" value="ECO:0007669"/>
    <property type="project" value="EnsemblFungi"/>
</dbReference>
<dbReference type="GO" id="GO:2001246">
    <property type="term" value="P:negative regulation of phosphatidylcholine biosynthetic process"/>
    <property type="evidence" value="ECO:0007669"/>
    <property type="project" value="EnsemblFungi"/>
</dbReference>
<dbReference type="GO" id="GO:1901352">
    <property type="term" value="P:negative regulation of phosphatidylglycerol biosynthetic process"/>
    <property type="evidence" value="ECO:0007669"/>
    <property type="project" value="EnsemblFungi"/>
</dbReference>
<dbReference type="GO" id="GO:0046488">
    <property type="term" value="P:phosphatidylinositol metabolic process"/>
    <property type="evidence" value="ECO:0007669"/>
    <property type="project" value="EnsemblFungi"/>
</dbReference>
<dbReference type="GO" id="GO:0006892">
    <property type="term" value="P:post-Golgi vesicle-mediated transport"/>
    <property type="evidence" value="ECO:0000318"/>
    <property type="project" value="GO_Central"/>
</dbReference>
<dbReference type="CDD" id="cd00170">
    <property type="entry name" value="SEC14"/>
    <property type="match status" value="1"/>
</dbReference>
<dbReference type="FunFam" id="3.40.525.10:FF:000011">
    <property type="entry name" value="SEC14 cytosolic factor"/>
    <property type="match status" value="1"/>
</dbReference>
<dbReference type="Gene3D" id="3.40.525.10">
    <property type="entry name" value="CRAL-TRIO lipid binding domain"/>
    <property type="match status" value="1"/>
</dbReference>
<dbReference type="Gene3D" id="1.10.8.20">
    <property type="entry name" value="N-terminal domain of phosphatidylinositol transfer protein sec14p"/>
    <property type="match status" value="1"/>
</dbReference>
<dbReference type="InterPro" id="IPR001251">
    <property type="entry name" value="CRAL-TRIO_dom"/>
</dbReference>
<dbReference type="InterPro" id="IPR036865">
    <property type="entry name" value="CRAL-TRIO_dom_sf"/>
</dbReference>
<dbReference type="InterPro" id="IPR011074">
    <property type="entry name" value="CRAL/TRIO_N_dom"/>
</dbReference>
<dbReference type="InterPro" id="IPR036273">
    <property type="entry name" value="CRAL/TRIO_N_dom_sf"/>
</dbReference>
<dbReference type="InterPro" id="IPR051026">
    <property type="entry name" value="PI/PC_transfer"/>
</dbReference>
<dbReference type="PANTHER" id="PTHR45657">
    <property type="entry name" value="CRAL-TRIO DOMAIN-CONTAINING PROTEIN YKL091C-RELATED"/>
    <property type="match status" value="1"/>
</dbReference>
<dbReference type="PANTHER" id="PTHR45657:SF1">
    <property type="entry name" value="CRAL-TRIO DOMAIN-CONTAINING PROTEIN YKL091C-RELATED"/>
    <property type="match status" value="1"/>
</dbReference>
<dbReference type="Pfam" id="PF00650">
    <property type="entry name" value="CRAL_TRIO"/>
    <property type="match status" value="1"/>
</dbReference>
<dbReference type="Pfam" id="PF03765">
    <property type="entry name" value="CRAL_TRIO_N"/>
    <property type="match status" value="1"/>
</dbReference>
<dbReference type="PRINTS" id="PR00180">
    <property type="entry name" value="CRETINALDHBP"/>
</dbReference>
<dbReference type="SMART" id="SM01100">
    <property type="entry name" value="CRAL_TRIO_N"/>
    <property type="match status" value="1"/>
</dbReference>
<dbReference type="SMART" id="SM00516">
    <property type="entry name" value="SEC14"/>
    <property type="match status" value="1"/>
</dbReference>
<dbReference type="SUPFAM" id="SSF52087">
    <property type="entry name" value="CRAL/TRIO domain"/>
    <property type="match status" value="1"/>
</dbReference>
<dbReference type="SUPFAM" id="SSF46938">
    <property type="entry name" value="CRAL/TRIO N-terminal domain"/>
    <property type="match status" value="1"/>
</dbReference>
<dbReference type="PROSITE" id="PS50191">
    <property type="entry name" value="CRAL_TRIO"/>
    <property type="match status" value="1"/>
</dbReference>
<accession>Q75DK1</accession>
<name>SEC14_EREGS</name>
<sequence length="308" mass="34777">MPTEEELLASYPSKCAAGSLAGTPGNLTSEHEAALEELRKVLKQAGFTKRLDDSTLLRFLRARKFDVAAARAMFENCEKWRKENGVDTIFEDFHYEEKPLVAKFYPQYYHKTDKDGRPVYIEELGAVNLTEMYKITTQERMLKNLIWEYESFSRYRLPASSRQADCLVETSCTILDLKGISISAAAQVLSYVREASNIGQNYYPERMGKFYMINAPFGFSAAFRLFKPFLDPVTVSKIFILGSSYQKELLKQIPAENLPVKFGGQSDVSEAEGGLYLSDIGPWRNPKYIGPEGEAPKAFSMSPKPESA</sequence>
<feature type="chain" id="PRO_0000210738" description="SEC14 cytosolic factor">
    <location>
        <begin position="1"/>
        <end position="308"/>
    </location>
</feature>
<feature type="domain" description="CRAL-TRIO" evidence="2">
    <location>
        <begin position="97"/>
        <end position="270"/>
    </location>
</feature>